<keyword id="KW-0067">ATP-binding</keyword>
<keyword id="KW-0436">Ligase</keyword>
<keyword id="KW-0460">Magnesium</keyword>
<keyword id="KW-0479">Metal-binding</keyword>
<keyword id="KW-0547">Nucleotide-binding</keyword>
<keyword id="KW-0816">Tricarboxylic acid cycle</keyword>
<protein>
    <recommendedName>
        <fullName evidence="1">Succinate--CoA ligase [ADP-forming] subunit beta</fullName>
        <ecNumber evidence="1">6.2.1.5</ecNumber>
    </recommendedName>
    <alternativeName>
        <fullName evidence="1">Succinyl-CoA synthetase subunit beta</fullName>
        <shortName evidence="1">SCS-beta</shortName>
    </alternativeName>
</protein>
<evidence type="ECO:0000255" key="1">
    <source>
        <dbReference type="HAMAP-Rule" id="MF_00558"/>
    </source>
</evidence>
<reference key="1">
    <citation type="journal article" date="2008" name="Chem. Biol. Interact.">
        <title>Extending the Bacillus cereus group genomics to putative food-borne pathogens of different toxicity.</title>
        <authorList>
            <person name="Lapidus A."/>
            <person name="Goltsman E."/>
            <person name="Auger S."/>
            <person name="Galleron N."/>
            <person name="Segurens B."/>
            <person name="Dossat C."/>
            <person name="Land M.L."/>
            <person name="Broussolle V."/>
            <person name="Brillard J."/>
            <person name="Guinebretiere M.-H."/>
            <person name="Sanchis V."/>
            <person name="Nguen-the C."/>
            <person name="Lereclus D."/>
            <person name="Richardson P."/>
            <person name="Wincker P."/>
            <person name="Weissenbach J."/>
            <person name="Ehrlich S.D."/>
            <person name="Sorokin A."/>
        </authorList>
    </citation>
    <scope>NUCLEOTIDE SEQUENCE [LARGE SCALE GENOMIC DNA]</scope>
    <source>
        <strain>KBAB4</strain>
    </source>
</reference>
<dbReference type="EC" id="6.2.1.5" evidence="1"/>
<dbReference type="EMBL" id="CP000903">
    <property type="protein sequence ID" value="ABY44830.1"/>
    <property type="molecule type" value="Genomic_DNA"/>
</dbReference>
<dbReference type="RefSeq" id="WP_002014529.1">
    <property type="nucleotide sequence ID" value="NZ_CAKMRX030000111.1"/>
</dbReference>
<dbReference type="SMR" id="A9VT74"/>
<dbReference type="GeneID" id="66266600"/>
<dbReference type="KEGG" id="bwe:BcerKBAB4_3659"/>
<dbReference type="eggNOG" id="COG0045">
    <property type="taxonomic scope" value="Bacteria"/>
</dbReference>
<dbReference type="HOGENOM" id="CLU_037430_0_2_9"/>
<dbReference type="UniPathway" id="UPA00223">
    <property type="reaction ID" value="UER00999"/>
</dbReference>
<dbReference type="Proteomes" id="UP000002154">
    <property type="component" value="Chromosome"/>
</dbReference>
<dbReference type="GO" id="GO:0005829">
    <property type="term" value="C:cytosol"/>
    <property type="evidence" value="ECO:0007669"/>
    <property type="project" value="TreeGrafter"/>
</dbReference>
<dbReference type="GO" id="GO:0042709">
    <property type="term" value="C:succinate-CoA ligase complex"/>
    <property type="evidence" value="ECO:0007669"/>
    <property type="project" value="TreeGrafter"/>
</dbReference>
<dbReference type="GO" id="GO:0005524">
    <property type="term" value="F:ATP binding"/>
    <property type="evidence" value="ECO:0007669"/>
    <property type="project" value="UniProtKB-UniRule"/>
</dbReference>
<dbReference type="GO" id="GO:0000287">
    <property type="term" value="F:magnesium ion binding"/>
    <property type="evidence" value="ECO:0007669"/>
    <property type="project" value="UniProtKB-UniRule"/>
</dbReference>
<dbReference type="GO" id="GO:0004775">
    <property type="term" value="F:succinate-CoA ligase (ADP-forming) activity"/>
    <property type="evidence" value="ECO:0007669"/>
    <property type="project" value="UniProtKB-UniRule"/>
</dbReference>
<dbReference type="GO" id="GO:0004776">
    <property type="term" value="F:succinate-CoA ligase (GDP-forming) activity"/>
    <property type="evidence" value="ECO:0007669"/>
    <property type="project" value="RHEA"/>
</dbReference>
<dbReference type="GO" id="GO:0006104">
    <property type="term" value="P:succinyl-CoA metabolic process"/>
    <property type="evidence" value="ECO:0007669"/>
    <property type="project" value="TreeGrafter"/>
</dbReference>
<dbReference type="GO" id="GO:0006099">
    <property type="term" value="P:tricarboxylic acid cycle"/>
    <property type="evidence" value="ECO:0007669"/>
    <property type="project" value="UniProtKB-UniRule"/>
</dbReference>
<dbReference type="FunFam" id="3.30.1490.20:FF:000002">
    <property type="entry name" value="Succinate--CoA ligase [ADP-forming] subunit beta"/>
    <property type="match status" value="1"/>
</dbReference>
<dbReference type="FunFam" id="3.30.470.20:FF:000002">
    <property type="entry name" value="Succinate--CoA ligase [ADP-forming] subunit beta"/>
    <property type="match status" value="1"/>
</dbReference>
<dbReference type="FunFam" id="3.40.50.261:FF:000001">
    <property type="entry name" value="Succinate--CoA ligase [ADP-forming] subunit beta"/>
    <property type="match status" value="1"/>
</dbReference>
<dbReference type="Gene3D" id="3.30.1490.20">
    <property type="entry name" value="ATP-grasp fold, A domain"/>
    <property type="match status" value="1"/>
</dbReference>
<dbReference type="Gene3D" id="3.30.470.20">
    <property type="entry name" value="ATP-grasp fold, B domain"/>
    <property type="match status" value="1"/>
</dbReference>
<dbReference type="Gene3D" id="3.40.50.261">
    <property type="entry name" value="Succinyl-CoA synthetase domains"/>
    <property type="match status" value="1"/>
</dbReference>
<dbReference type="HAMAP" id="MF_00558">
    <property type="entry name" value="Succ_CoA_beta"/>
    <property type="match status" value="1"/>
</dbReference>
<dbReference type="InterPro" id="IPR011761">
    <property type="entry name" value="ATP-grasp"/>
</dbReference>
<dbReference type="InterPro" id="IPR013650">
    <property type="entry name" value="ATP-grasp_succ-CoA_synth-type"/>
</dbReference>
<dbReference type="InterPro" id="IPR013815">
    <property type="entry name" value="ATP_grasp_subdomain_1"/>
</dbReference>
<dbReference type="InterPro" id="IPR005811">
    <property type="entry name" value="SUCC_ACL_C"/>
</dbReference>
<dbReference type="InterPro" id="IPR005809">
    <property type="entry name" value="Succ_CoA_ligase-like_bsu"/>
</dbReference>
<dbReference type="InterPro" id="IPR016102">
    <property type="entry name" value="Succinyl-CoA_synth-like"/>
</dbReference>
<dbReference type="NCBIfam" id="NF001913">
    <property type="entry name" value="PRK00696.1"/>
    <property type="match status" value="1"/>
</dbReference>
<dbReference type="NCBIfam" id="TIGR01016">
    <property type="entry name" value="sucCoAbeta"/>
    <property type="match status" value="1"/>
</dbReference>
<dbReference type="PANTHER" id="PTHR11815:SF10">
    <property type="entry name" value="SUCCINATE--COA LIGASE [GDP-FORMING] SUBUNIT BETA, MITOCHONDRIAL"/>
    <property type="match status" value="1"/>
</dbReference>
<dbReference type="PANTHER" id="PTHR11815">
    <property type="entry name" value="SUCCINYL-COA SYNTHETASE BETA CHAIN"/>
    <property type="match status" value="1"/>
</dbReference>
<dbReference type="Pfam" id="PF08442">
    <property type="entry name" value="ATP-grasp_2"/>
    <property type="match status" value="1"/>
</dbReference>
<dbReference type="Pfam" id="PF00549">
    <property type="entry name" value="Ligase_CoA"/>
    <property type="match status" value="1"/>
</dbReference>
<dbReference type="PIRSF" id="PIRSF001554">
    <property type="entry name" value="SucCS_beta"/>
    <property type="match status" value="1"/>
</dbReference>
<dbReference type="SUPFAM" id="SSF56059">
    <property type="entry name" value="Glutathione synthetase ATP-binding domain-like"/>
    <property type="match status" value="1"/>
</dbReference>
<dbReference type="SUPFAM" id="SSF52210">
    <property type="entry name" value="Succinyl-CoA synthetase domains"/>
    <property type="match status" value="1"/>
</dbReference>
<dbReference type="PROSITE" id="PS50975">
    <property type="entry name" value="ATP_GRASP"/>
    <property type="match status" value="1"/>
</dbReference>
<feature type="chain" id="PRO_1000129162" description="Succinate--CoA ligase [ADP-forming] subunit beta">
    <location>
        <begin position="1"/>
        <end position="386"/>
    </location>
</feature>
<feature type="domain" description="ATP-grasp" evidence="1">
    <location>
        <begin position="9"/>
        <end position="244"/>
    </location>
</feature>
<feature type="binding site" evidence="1">
    <location>
        <position position="46"/>
    </location>
    <ligand>
        <name>ATP</name>
        <dbReference type="ChEBI" id="CHEBI:30616"/>
    </ligand>
</feature>
<feature type="binding site" evidence="1">
    <location>
        <begin position="53"/>
        <end position="55"/>
    </location>
    <ligand>
        <name>ATP</name>
        <dbReference type="ChEBI" id="CHEBI:30616"/>
    </ligand>
</feature>
<feature type="binding site" evidence="1">
    <location>
        <position position="99"/>
    </location>
    <ligand>
        <name>ATP</name>
        <dbReference type="ChEBI" id="CHEBI:30616"/>
    </ligand>
</feature>
<feature type="binding site" evidence="1">
    <location>
        <position position="102"/>
    </location>
    <ligand>
        <name>ATP</name>
        <dbReference type="ChEBI" id="CHEBI:30616"/>
    </ligand>
</feature>
<feature type="binding site" evidence="1">
    <location>
        <position position="107"/>
    </location>
    <ligand>
        <name>ATP</name>
        <dbReference type="ChEBI" id="CHEBI:30616"/>
    </ligand>
</feature>
<feature type="binding site" evidence="1">
    <location>
        <position position="199"/>
    </location>
    <ligand>
        <name>Mg(2+)</name>
        <dbReference type="ChEBI" id="CHEBI:18420"/>
    </ligand>
</feature>
<feature type="binding site" evidence="1">
    <location>
        <position position="213"/>
    </location>
    <ligand>
        <name>Mg(2+)</name>
        <dbReference type="ChEBI" id="CHEBI:18420"/>
    </ligand>
</feature>
<feature type="binding site" evidence="1">
    <location>
        <position position="264"/>
    </location>
    <ligand>
        <name>substrate</name>
        <note>ligand shared with subunit alpha</note>
    </ligand>
</feature>
<feature type="binding site" evidence="1">
    <location>
        <begin position="321"/>
        <end position="323"/>
    </location>
    <ligand>
        <name>substrate</name>
        <note>ligand shared with subunit alpha</note>
    </ligand>
</feature>
<accession>A9VT74</accession>
<proteinExistence type="inferred from homology"/>
<comment type="function">
    <text evidence="1">Succinyl-CoA synthetase functions in the citric acid cycle (TCA), coupling the hydrolysis of succinyl-CoA to the synthesis of either ATP or GTP and thus represents the only step of substrate-level phosphorylation in the TCA. The beta subunit provides nucleotide specificity of the enzyme and binds the substrate succinate, while the binding sites for coenzyme A and phosphate are found in the alpha subunit.</text>
</comment>
<comment type="catalytic activity">
    <reaction evidence="1">
        <text>succinate + ATP + CoA = succinyl-CoA + ADP + phosphate</text>
        <dbReference type="Rhea" id="RHEA:17661"/>
        <dbReference type="ChEBI" id="CHEBI:30031"/>
        <dbReference type="ChEBI" id="CHEBI:30616"/>
        <dbReference type="ChEBI" id="CHEBI:43474"/>
        <dbReference type="ChEBI" id="CHEBI:57287"/>
        <dbReference type="ChEBI" id="CHEBI:57292"/>
        <dbReference type="ChEBI" id="CHEBI:456216"/>
        <dbReference type="EC" id="6.2.1.5"/>
    </reaction>
    <physiologicalReaction direction="right-to-left" evidence="1">
        <dbReference type="Rhea" id="RHEA:17663"/>
    </physiologicalReaction>
</comment>
<comment type="catalytic activity">
    <reaction evidence="1">
        <text>GTP + succinate + CoA = succinyl-CoA + GDP + phosphate</text>
        <dbReference type="Rhea" id="RHEA:22120"/>
        <dbReference type="ChEBI" id="CHEBI:30031"/>
        <dbReference type="ChEBI" id="CHEBI:37565"/>
        <dbReference type="ChEBI" id="CHEBI:43474"/>
        <dbReference type="ChEBI" id="CHEBI:57287"/>
        <dbReference type="ChEBI" id="CHEBI:57292"/>
        <dbReference type="ChEBI" id="CHEBI:58189"/>
    </reaction>
    <physiologicalReaction direction="right-to-left" evidence="1">
        <dbReference type="Rhea" id="RHEA:22122"/>
    </physiologicalReaction>
</comment>
<comment type="cofactor">
    <cofactor evidence="1">
        <name>Mg(2+)</name>
        <dbReference type="ChEBI" id="CHEBI:18420"/>
    </cofactor>
    <text evidence="1">Binds 1 Mg(2+) ion per subunit.</text>
</comment>
<comment type="pathway">
    <text evidence="1">Carbohydrate metabolism; tricarboxylic acid cycle; succinate from succinyl-CoA (ligase route): step 1/1.</text>
</comment>
<comment type="subunit">
    <text evidence="1">Heterotetramer of two alpha and two beta subunits.</text>
</comment>
<comment type="similarity">
    <text evidence="1">Belongs to the succinate/malate CoA ligase beta subunit family.</text>
</comment>
<name>SUCC_BACMK</name>
<gene>
    <name evidence="1" type="primary">sucC</name>
    <name type="ordered locus">BcerKBAB4_3659</name>
</gene>
<sequence>MNIHEYQGKAVLRSYGVSVPNGKVAFTVEEAVEAAKELGTEVCVVKAQIHAGGRGKAGGVKVAKNLEEVRTYAESILGTTLVTHQTGPEGKEVKRLLIEEGCDIKKEYYVGLVLDRATSQVVLMASEEGGTEIEEVAEKTPEKIFKEYIDPAVGLQGFQARRIAFNINIPKELVGQAVKFMMGLYSAFIEKDCSIAEINPLVTTGDGKVMALDAKLNFDSNALYRNKDILELRDLEEEDSKEIEASKYDLNYIPLDGNIGCMVNGAGLAMATMDIIKHYHGDPANFLDVGGGATAEKVTEAFKIILSDKNVKGIFVNIFGGIMKCDVIAEGVIEATKQVGLELPLVVRLEGTNVELGKKILNESGLNIVAAESMADGAQKIVSLVG</sequence>
<organism>
    <name type="scientific">Bacillus mycoides (strain KBAB4)</name>
    <name type="common">Bacillus weihenstephanensis</name>
    <dbReference type="NCBI Taxonomy" id="315730"/>
    <lineage>
        <taxon>Bacteria</taxon>
        <taxon>Bacillati</taxon>
        <taxon>Bacillota</taxon>
        <taxon>Bacilli</taxon>
        <taxon>Bacillales</taxon>
        <taxon>Bacillaceae</taxon>
        <taxon>Bacillus</taxon>
        <taxon>Bacillus cereus group</taxon>
    </lineage>
</organism>